<keyword id="KW-0067">ATP-binding</keyword>
<keyword id="KW-0315">Glutamine amidotransferase</keyword>
<keyword id="KW-0332">GMP biosynthesis</keyword>
<keyword id="KW-0436">Ligase</keyword>
<keyword id="KW-0547">Nucleotide-binding</keyword>
<keyword id="KW-0658">Purine biosynthesis</keyword>
<evidence type="ECO:0000255" key="1">
    <source>
        <dbReference type="HAMAP-Rule" id="MF_00344"/>
    </source>
</evidence>
<name>GUAA_STAAC</name>
<protein>
    <recommendedName>
        <fullName evidence="1">GMP synthase [glutamine-hydrolyzing]</fullName>
        <ecNumber evidence="1">6.3.5.2</ecNumber>
    </recommendedName>
    <alternativeName>
        <fullName evidence="1">GMP synthetase</fullName>
    </alternativeName>
    <alternativeName>
        <fullName evidence="1">Glutamine amidotransferase</fullName>
    </alternativeName>
</protein>
<accession>Q5HIQ6</accession>
<sequence length="513" mass="58230">MEMAKEQELILVLDFGSQYNQLITRRIREMGVYSELHDHEISIEEIKKMNPKGIILSGGPNSVYEEGSFTIDPEIYNLGIPVLGICYGMQLTTKLLGGKVERANEREYGKAIINAKSDELFAGLPAEQTVWMSHSDKVIEIPEGFEVIADSPSTDYAAIEDKKRRIYGVQFHPEVRHTEYGNDLLNNFVRRVCDCRGQWTMENFIEIEIEKIRQRVGDRRVLCAMSGGVDSSVVAVLLHKAIGDQLTCIFVDHGLLRKGEGDMVMEQFGEGFNMNIIRVNAKDRFMNKLKGVSDPEQKRKIIGNEFVYVFDDEASKLKGVDFLAQGTLYTDVIESGTKTAQTIKSHHNVGGLPEDMEFELIEPINTLFKDEVRKLGIELGIPEHLVWRQPFPGPGLGIRVLGEITEDKLEIVRESDAILRQVIREEGLEREIWQYFTVLPNIQSVGVMGDYRTYDHTVGIRAVTSIDGMTSDFARIDWEVLQKISSRIVNEVDHVNRVVYDITSKPPSTIEWE</sequence>
<dbReference type="EC" id="6.3.5.2" evidence="1"/>
<dbReference type="EMBL" id="CP000046">
    <property type="protein sequence ID" value="AAW38928.1"/>
    <property type="molecule type" value="Genomic_DNA"/>
</dbReference>
<dbReference type="RefSeq" id="WP_000424966.1">
    <property type="nucleotide sequence ID" value="NZ_JBGOFO010000001.1"/>
</dbReference>
<dbReference type="SMR" id="Q5HIQ6"/>
<dbReference type="KEGG" id="sac:SACOL0461"/>
<dbReference type="HOGENOM" id="CLU_014340_0_5_9"/>
<dbReference type="UniPathway" id="UPA00189">
    <property type="reaction ID" value="UER00296"/>
</dbReference>
<dbReference type="Proteomes" id="UP000000530">
    <property type="component" value="Chromosome"/>
</dbReference>
<dbReference type="GO" id="GO:0005829">
    <property type="term" value="C:cytosol"/>
    <property type="evidence" value="ECO:0007669"/>
    <property type="project" value="TreeGrafter"/>
</dbReference>
<dbReference type="GO" id="GO:0005524">
    <property type="term" value="F:ATP binding"/>
    <property type="evidence" value="ECO:0007669"/>
    <property type="project" value="UniProtKB-UniRule"/>
</dbReference>
<dbReference type="GO" id="GO:0003921">
    <property type="term" value="F:GMP synthase activity"/>
    <property type="evidence" value="ECO:0007669"/>
    <property type="project" value="InterPro"/>
</dbReference>
<dbReference type="CDD" id="cd01742">
    <property type="entry name" value="GATase1_GMP_Synthase"/>
    <property type="match status" value="1"/>
</dbReference>
<dbReference type="CDD" id="cd01997">
    <property type="entry name" value="GMP_synthase_C"/>
    <property type="match status" value="1"/>
</dbReference>
<dbReference type="FunFam" id="3.30.300.10:FF:000002">
    <property type="entry name" value="GMP synthase [glutamine-hydrolyzing]"/>
    <property type="match status" value="1"/>
</dbReference>
<dbReference type="FunFam" id="3.40.50.620:FF:000001">
    <property type="entry name" value="GMP synthase [glutamine-hydrolyzing]"/>
    <property type="match status" value="1"/>
</dbReference>
<dbReference type="FunFam" id="3.40.50.880:FF:000001">
    <property type="entry name" value="GMP synthase [glutamine-hydrolyzing]"/>
    <property type="match status" value="1"/>
</dbReference>
<dbReference type="Gene3D" id="3.30.300.10">
    <property type="match status" value="1"/>
</dbReference>
<dbReference type="Gene3D" id="3.40.50.880">
    <property type="match status" value="1"/>
</dbReference>
<dbReference type="Gene3D" id="3.40.50.620">
    <property type="entry name" value="HUPs"/>
    <property type="match status" value="1"/>
</dbReference>
<dbReference type="HAMAP" id="MF_00344">
    <property type="entry name" value="GMP_synthase"/>
    <property type="match status" value="1"/>
</dbReference>
<dbReference type="InterPro" id="IPR029062">
    <property type="entry name" value="Class_I_gatase-like"/>
</dbReference>
<dbReference type="InterPro" id="IPR017926">
    <property type="entry name" value="GATASE"/>
</dbReference>
<dbReference type="InterPro" id="IPR001674">
    <property type="entry name" value="GMP_synth_C"/>
</dbReference>
<dbReference type="InterPro" id="IPR004739">
    <property type="entry name" value="GMP_synth_GATase"/>
</dbReference>
<dbReference type="InterPro" id="IPR022955">
    <property type="entry name" value="GMP_synthase"/>
</dbReference>
<dbReference type="InterPro" id="IPR025777">
    <property type="entry name" value="GMPS_ATP_PPase_dom"/>
</dbReference>
<dbReference type="InterPro" id="IPR014729">
    <property type="entry name" value="Rossmann-like_a/b/a_fold"/>
</dbReference>
<dbReference type="NCBIfam" id="TIGR00884">
    <property type="entry name" value="guaA_Cterm"/>
    <property type="match status" value="1"/>
</dbReference>
<dbReference type="NCBIfam" id="TIGR00888">
    <property type="entry name" value="guaA_Nterm"/>
    <property type="match status" value="1"/>
</dbReference>
<dbReference type="NCBIfam" id="NF000848">
    <property type="entry name" value="PRK00074.1"/>
    <property type="match status" value="1"/>
</dbReference>
<dbReference type="PANTHER" id="PTHR11922:SF2">
    <property type="entry name" value="GMP SYNTHASE [GLUTAMINE-HYDROLYZING]"/>
    <property type="match status" value="1"/>
</dbReference>
<dbReference type="PANTHER" id="PTHR11922">
    <property type="entry name" value="GMP SYNTHASE-RELATED"/>
    <property type="match status" value="1"/>
</dbReference>
<dbReference type="Pfam" id="PF00117">
    <property type="entry name" value="GATase"/>
    <property type="match status" value="1"/>
</dbReference>
<dbReference type="Pfam" id="PF00958">
    <property type="entry name" value="GMP_synt_C"/>
    <property type="match status" value="1"/>
</dbReference>
<dbReference type="Pfam" id="PF03054">
    <property type="entry name" value="tRNA_Me_trans"/>
    <property type="match status" value="1"/>
</dbReference>
<dbReference type="PRINTS" id="PR00097">
    <property type="entry name" value="ANTSNTHASEII"/>
</dbReference>
<dbReference type="PRINTS" id="PR00099">
    <property type="entry name" value="CPSGATASE"/>
</dbReference>
<dbReference type="PRINTS" id="PR00096">
    <property type="entry name" value="GATASE"/>
</dbReference>
<dbReference type="SUPFAM" id="SSF52402">
    <property type="entry name" value="Adenine nucleotide alpha hydrolases-like"/>
    <property type="match status" value="1"/>
</dbReference>
<dbReference type="SUPFAM" id="SSF52317">
    <property type="entry name" value="Class I glutamine amidotransferase-like"/>
    <property type="match status" value="1"/>
</dbReference>
<dbReference type="SUPFAM" id="SSF54810">
    <property type="entry name" value="GMP synthetase C-terminal dimerisation domain"/>
    <property type="match status" value="1"/>
</dbReference>
<dbReference type="PROSITE" id="PS51273">
    <property type="entry name" value="GATASE_TYPE_1"/>
    <property type="match status" value="1"/>
</dbReference>
<dbReference type="PROSITE" id="PS51553">
    <property type="entry name" value="GMPS_ATP_PPASE"/>
    <property type="match status" value="1"/>
</dbReference>
<organism>
    <name type="scientific">Staphylococcus aureus (strain COL)</name>
    <dbReference type="NCBI Taxonomy" id="93062"/>
    <lineage>
        <taxon>Bacteria</taxon>
        <taxon>Bacillati</taxon>
        <taxon>Bacillota</taxon>
        <taxon>Bacilli</taxon>
        <taxon>Bacillales</taxon>
        <taxon>Staphylococcaceae</taxon>
        <taxon>Staphylococcus</taxon>
    </lineage>
</organism>
<gene>
    <name evidence="1" type="primary">guaA</name>
    <name type="ordered locus">SACOL0461</name>
</gene>
<proteinExistence type="inferred from homology"/>
<reference key="1">
    <citation type="journal article" date="2005" name="J. Bacteriol.">
        <title>Insights on evolution of virulence and resistance from the complete genome analysis of an early methicillin-resistant Staphylococcus aureus strain and a biofilm-producing methicillin-resistant Staphylococcus epidermidis strain.</title>
        <authorList>
            <person name="Gill S.R."/>
            <person name="Fouts D.E."/>
            <person name="Archer G.L."/>
            <person name="Mongodin E.F."/>
            <person name="DeBoy R.T."/>
            <person name="Ravel J."/>
            <person name="Paulsen I.T."/>
            <person name="Kolonay J.F."/>
            <person name="Brinkac L.M."/>
            <person name="Beanan M.J."/>
            <person name="Dodson R.J."/>
            <person name="Daugherty S.C."/>
            <person name="Madupu R."/>
            <person name="Angiuoli S.V."/>
            <person name="Durkin A.S."/>
            <person name="Haft D.H."/>
            <person name="Vamathevan J.J."/>
            <person name="Khouri H."/>
            <person name="Utterback T.R."/>
            <person name="Lee C."/>
            <person name="Dimitrov G."/>
            <person name="Jiang L."/>
            <person name="Qin H."/>
            <person name="Weidman J."/>
            <person name="Tran K."/>
            <person name="Kang K.H."/>
            <person name="Hance I.R."/>
            <person name="Nelson K.E."/>
            <person name="Fraser C.M."/>
        </authorList>
    </citation>
    <scope>NUCLEOTIDE SEQUENCE [LARGE SCALE GENOMIC DNA]</scope>
    <source>
        <strain>COL</strain>
    </source>
</reference>
<feature type="chain" id="PRO_0000140175" description="GMP synthase [glutamine-hydrolyzing]">
    <location>
        <begin position="1"/>
        <end position="513"/>
    </location>
</feature>
<feature type="domain" description="Glutamine amidotransferase type-1" evidence="1">
    <location>
        <begin position="9"/>
        <end position="198"/>
    </location>
</feature>
<feature type="domain" description="GMPS ATP-PPase" evidence="1">
    <location>
        <begin position="199"/>
        <end position="388"/>
    </location>
</feature>
<feature type="active site" description="Nucleophile" evidence="1">
    <location>
        <position position="86"/>
    </location>
</feature>
<feature type="active site" evidence="1">
    <location>
        <position position="172"/>
    </location>
</feature>
<feature type="active site" evidence="1">
    <location>
        <position position="174"/>
    </location>
</feature>
<feature type="binding site" evidence="1">
    <location>
        <begin position="226"/>
        <end position="232"/>
    </location>
    <ligand>
        <name>ATP</name>
        <dbReference type="ChEBI" id="CHEBI:30616"/>
    </ligand>
</feature>
<comment type="function">
    <text evidence="1">Catalyzes the synthesis of GMP from XMP.</text>
</comment>
<comment type="catalytic activity">
    <reaction evidence="1">
        <text>XMP + L-glutamine + ATP + H2O = GMP + L-glutamate + AMP + diphosphate + 2 H(+)</text>
        <dbReference type="Rhea" id="RHEA:11680"/>
        <dbReference type="ChEBI" id="CHEBI:15377"/>
        <dbReference type="ChEBI" id="CHEBI:15378"/>
        <dbReference type="ChEBI" id="CHEBI:29985"/>
        <dbReference type="ChEBI" id="CHEBI:30616"/>
        <dbReference type="ChEBI" id="CHEBI:33019"/>
        <dbReference type="ChEBI" id="CHEBI:57464"/>
        <dbReference type="ChEBI" id="CHEBI:58115"/>
        <dbReference type="ChEBI" id="CHEBI:58359"/>
        <dbReference type="ChEBI" id="CHEBI:456215"/>
        <dbReference type="EC" id="6.3.5.2"/>
    </reaction>
</comment>
<comment type="pathway">
    <text evidence="1">Purine metabolism; GMP biosynthesis; GMP from XMP (L-Gln route): step 1/1.</text>
</comment>
<comment type="subunit">
    <text evidence="1">Homodimer.</text>
</comment>